<dbReference type="EC" id="3.4.24.81" evidence="10 16 18 21"/>
<dbReference type="EMBL" id="AF011379">
    <property type="protein sequence ID" value="AAC53303.1"/>
    <property type="molecule type" value="mRNA"/>
</dbReference>
<dbReference type="EMBL" id="AC091263">
    <property type="status" value="NOT_ANNOTATED_CDS"/>
    <property type="molecule type" value="Genomic_DNA"/>
</dbReference>
<dbReference type="EMBL" id="AC160636">
    <property type="status" value="NOT_ANNOTATED_CDS"/>
    <property type="molecule type" value="Genomic_DNA"/>
</dbReference>
<dbReference type="EMBL" id="CT025701">
    <property type="status" value="NOT_ANNOTATED_CDS"/>
    <property type="molecule type" value="Genomic_DNA"/>
</dbReference>
<dbReference type="EMBL" id="CH466522">
    <property type="protein sequence ID" value="EDL26211.1"/>
    <property type="molecule type" value="Genomic_DNA"/>
</dbReference>
<dbReference type="EMBL" id="AK036883">
    <property type="protein sequence ID" value="BAC29620.1"/>
    <property type="molecule type" value="mRNA"/>
</dbReference>
<dbReference type="EMBL" id="AK036599">
    <property type="protein sequence ID" value="BAC29502.1"/>
    <property type="molecule type" value="mRNA"/>
</dbReference>
<dbReference type="CCDS" id="CCDS23323.1"/>
<dbReference type="RefSeq" id="NP_031425.2">
    <property type="nucleotide sequence ID" value="NM_007399.4"/>
</dbReference>
<dbReference type="SMR" id="O35598"/>
<dbReference type="BioGRID" id="197960">
    <property type="interactions" value="201"/>
</dbReference>
<dbReference type="FunCoup" id="O35598">
    <property type="interactions" value="3746"/>
</dbReference>
<dbReference type="IntAct" id="O35598">
    <property type="interactions" value="1"/>
</dbReference>
<dbReference type="STRING" id="10090.ENSMUSP00000063839"/>
<dbReference type="MEROPS" id="M12.210"/>
<dbReference type="GlyConnect" id="2257">
    <property type="glycosylation" value="6 N-Linked glycans (4 sites)"/>
</dbReference>
<dbReference type="GlyCosmos" id="O35598">
    <property type="glycosylation" value="4 sites, 6 glycans"/>
</dbReference>
<dbReference type="GlyGen" id="O35598">
    <property type="glycosylation" value="4 sites, 9 N-linked glycans (4 sites)"/>
</dbReference>
<dbReference type="iPTMnet" id="O35598"/>
<dbReference type="PhosphoSitePlus" id="O35598"/>
<dbReference type="SwissPalm" id="O35598"/>
<dbReference type="jPOST" id="O35598"/>
<dbReference type="PaxDb" id="10090-ENSMUSP00000063839"/>
<dbReference type="PeptideAtlas" id="O35598"/>
<dbReference type="ProteomicsDB" id="285601"/>
<dbReference type="Pumba" id="O35598"/>
<dbReference type="ABCD" id="O35598">
    <property type="antibodies" value="1 sequenced antibody"/>
</dbReference>
<dbReference type="Antibodypedia" id="3441">
    <property type="antibodies" value="590 antibodies from 43 providers"/>
</dbReference>
<dbReference type="DNASU" id="11487"/>
<dbReference type="Ensembl" id="ENSMUST00000067880.13">
    <property type="protein sequence ID" value="ENSMUSP00000063839.7"/>
    <property type="gene ID" value="ENSMUSG00000054693.15"/>
</dbReference>
<dbReference type="GeneID" id="11487"/>
<dbReference type="KEGG" id="mmu:11487"/>
<dbReference type="UCSC" id="uc009qor.1">
    <property type="organism name" value="mouse"/>
</dbReference>
<dbReference type="AGR" id="MGI:109548"/>
<dbReference type="CTD" id="102"/>
<dbReference type="MGI" id="MGI:109548">
    <property type="gene designation" value="Adam10"/>
</dbReference>
<dbReference type="VEuPathDB" id="HostDB:ENSMUSG00000054693"/>
<dbReference type="eggNOG" id="KOG3658">
    <property type="taxonomic scope" value="Eukaryota"/>
</dbReference>
<dbReference type="GeneTree" id="ENSGT00940000160579"/>
<dbReference type="HOGENOM" id="CLU_004602_0_0_1"/>
<dbReference type="InParanoid" id="O35598"/>
<dbReference type="OMA" id="MAVFIRC"/>
<dbReference type="OrthoDB" id="2149267at2759"/>
<dbReference type="PhylomeDB" id="O35598"/>
<dbReference type="TreeFam" id="TF352021"/>
<dbReference type="BRENDA" id="3.4.24.81">
    <property type="organism ID" value="3474"/>
</dbReference>
<dbReference type="Reactome" id="R-MMU-1474228">
    <property type="pathway name" value="Degradation of the extracellular matrix"/>
</dbReference>
<dbReference type="Reactome" id="R-MMU-381426">
    <property type="pathway name" value="Regulation of Insulin-like Growth Factor (IGF) transport and uptake by Insulin-like Growth Factor Binding Proteins (IGFBPs)"/>
</dbReference>
<dbReference type="Reactome" id="R-MMU-6798695">
    <property type="pathway name" value="Neutrophil degranulation"/>
</dbReference>
<dbReference type="Reactome" id="R-MMU-8957275">
    <property type="pathway name" value="Post-translational protein phosphorylation"/>
</dbReference>
<dbReference type="Reactome" id="R-MMU-9013507">
    <property type="pathway name" value="NOTCH3 Activation and Transmission of Signal to the Nucleus"/>
</dbReference>
<dbReference type="BioGRID-ORCS" id="11487">
    <property type="hits" value="8 hits in 79 CRISPR screens"/>
</dbReference>
<dbReference type="ChiTaRS" id="Adam10">
    <property type="organism name" value="mouse"/>
</dbReference>
<dbReference type="PRO" id="PR:O35598"/>
<dbReference type="Proteomes" id="UP000000589">
    <property type="component" value="Chromosome 9"/>
</dbReference>
<dbReference type="RNAct" id="O35598">
    <property type="molecule type" value="protein"/>
</dbReference>
<dbReference type="Bgee" id="ENSMUSG00000054693">
    <property type="expression patterns" value="Expressed in brain blood vessel and 269 other cell types or tissues"/>
</dbReference>
<dbReference type="ExpressionAtlas" id="O35598">
    <property type="expression patterns" value="baseline and differential"/>
</dbReference>
<dbReference type="GO" id="GO:0005912">
    <property type="term" value="C:adherens junction"/>
    <property type="evidence" value="ECO:0007669"/>
    <property type="project" value="UniProtKB-SubCell"/>
</dbReference>
<dbReference type="GO" id="GO:0030424">
    <property type="term" value="C:axon"/>
    <property type="evidence" value="ECO:0007669"/>
    <property type="project" value="UniProtKB-SubCell"/>
</dbReference>
<dbReference type="GO" id="GO:0009986">
    <property type="term" value="C:cell surface"/>
    <property type="evidence" value="ECO:0000314"/>
    <property type="project" value="MGI"/>
</dbReference>
<dbReference type="GO" id="GO:0030136">
    <property type="term" value="C:clathrin-coated vesicle"/>
    <property type="evidence" value="ECO:0007669"/>
    <property type="project" value="UniProtKB-SubCell"/>
</dbReference>
<dbReference type="GO" id="GO:0062023">
    <property type="term" value="C:collagen-containing extracellular matrix"/>
    <property type="evidence" value="ECO:0007005"/>
    <property type="project" value="BHF-UCL"/>
</dbReference>
<dbReference type="GO" id="GO:0005737">
    <property type="term" value="C:cytoplasm"/>
    <property type="evidence" value="ECO:0000314"/>
    <property type="project" value="UniProtKB"/>
</dbReference>
<dbReference type="GO" id="GO:0030425">
    <property type="term" value="C:dendrite"/>
    <property type="evidence" value="ECO:0007669"/>
    <property type="project" value="UniProtKB-SubCell"/>
</dbReference>
<dbReference type="GO" id="GO:0098978">
    <property type="term" value="C:glutamatergic synapse"/>
    <property type="evidence" value="ECO:0000314"/>
    <property type="project" value="SynGO"/>
</dbReference>
<dbReference type="GO" id="GO:0005794">
    <property type="term" value="C:Golgi apparatus"/>
    <property type="evidence" value="ECO:0000250"/>
    <property type="project" value="UniProtKB"/>
</dbReference>
<dbReference type="GO" id="GO:0000139">
    <property type="term" value="C:Golgi membrane"/>
    <property type="evidence" value="ECO:0007669"/>
    <property type="project" value="UniProtKB-SubCell"/>
</dbReference>
<dbReference type="GO" id="GO:0005798">
    <property type="term" value="C:Golgi-associated vesicle"/>
    <property type="evidence" value="ECO:0000250"/>
    <property type="project" value="UniProtKB"/>
</dbReference>
<dbReference type="GO" id="GO:0005634">
    <property type="term" value="C:nucleus"/>
    <property type="evidence" value="ECO:0000314"/>
    <property type="project" value="UniProtKB"/>
</dbReference>
<dbReference type="GO" id="GO:0097038">
    <property type="term" value="C:perinuclear endoplasmic reticulum"/>
    <property type="evidence" value="ECO:0007669"/>
    <property type="project" value="Ensembl"/>
</dbReference>
<dbReference type="GO" id="GO:0005886">
    <property type="term" value="C:plasma membrane"/>
    <property type="evidence" value="ECO:0000314"/>
    <property type="project" value="UniProtKB"/>
</dbReference>
<dbReference type="GO" id="GO:0046930">
    <property type="term" value="C:pore complex"/>
    <property type="evidence" value="ECO:0000315"/>
    <property type="project" value="UniProtKB"/>
</dbReference>
<dbReference type="GO" id="GO:0014069">
    <property type="term" value="C:postsynaptic density"/>
    <property type="evidence" value="ECO:0000314"/>
    <property type="project" value="MGI"/>
</dbReference>
<dbReference type="GO" id="GO:0097060">
    <property type="term" value="C:synaptic membrane"/>
    <property type="evidence" value="ECO:0000314"/>
    <property type="project" value="UniProtKB"/>
</dbReference>
<dbReference type="GO" id="GO:0097197">
    <property type="term" value="C:tetraspanin-enriched microdomain"/>
    <property type="evidence" value="ECO:0007669"/>
    <property type="project" value="Ensembl"/>
</dbReference>
<dbReference type="GO" id="GO:0004175">
    <property type="term" value="F:endopeptidase activity"/>
    <property type="evidence" value="ECO:0000314"/>
    <property type="project" value="UniProtKB"/>
</dbReference>
<dbReference type="GO" id="GO:0046872">
    <property type="term" value="F:metal ion binding"/>
    <property type="evidence" value="ECO:0007669"/>
    <property type="project" value="UniProtKB-KW"/>
</dbReference>
<dbReference type="GO" id="GO:0070573">
    <property type="term" value="F:metallodipeptidase activity"/>
    <property type="evidence" value="ECO:0000315"/>
    <property type="project" value="MGI"/>
</dbReference>
<dbReference type="GO" id="GO:0004222">
    <property type="term" value="F:metalloendopeptidase activity"/>
    <property type="evidence" value="ECO:0000250"/>
    <property type="project" value="UniProtKB"/>
</dbReference>
<dbReference type="GO" id="GO:1902945">
    <property type="term" value="F:metalloendopeptidase activity involved in amyloid precursor protein catabolic process"/>
    <property type="evidence" value="ECO:0007669"/>
    <property type="project" value="Ensembl"/>
</dbReference>
<dbReference type="GO" id="GO:0008237">
    <property type="term" value="F:metallopeptidase activity"/>
    <property type="evidence" value="ECO:0000314"/>
    <property type="project" value="BHF-UCL"/>
</dbReference>
<dbReference type="GO" id="GO:0042803">
    <property type="term" value="F:protein homodimerization activity"/>
    <property type="evidence" value="ECO:0000353"/>
    <property type="project" value="UniProtKB"/>
</dbReference>
<dbReference type="GO" id="GO:0019901">
    <property type="term" value="F:protein kinase binding"/>
    <property type="evidence" value="ECO:0000314"/>
    <property type="project" value="UniProtKB"/>
</dbReference>
<dbReference type="GO" id="GO:0042169">
    <property type="term" value="F:SH2 domain binding"/>
    <property type="evidence" value="ECO:0000303"/>
    <property type="project" value="UniProtKB"/>
</dbReference>
<dbReference type="GO" id="GO:0017124">
    <property type="term" value="F:SH3 domain binding"/>
    <property type="evidence" value="ECO:0007669"/>
    <property type="project" value="UniProtKB-KW"/>
</dbReference>
<dbReference type="GO" id="GO:0034332">
    <property type="term" value="P:adherens junction organization"/>
    <property type="evidence" value="ECO:0000315"/>
    <property type="project" value="ARUK-UCL"/>
</dbReference>
<dbReference type="GO" id="GO:0090102">
    <property type="term" value="P:cochlea development"/>
    <property type="evidence" value="ECO:0000315"/>
    <property type="project" value="UniProtKB"/>
</dbReference>
<dbReference type="GO" id="GO:0051089">
    <property type="term" value="P:constitutive protein ectodomain proteolysis"/>
    <property type="evidence" value="ECO:0007669"/>
    <property type="project" value="Ensembl"/>
</dbReference>
<dbReference type="GO" id="GO:0038004">
    <property type="term" value="P:epidermal growth factor receptor ligand maturation"/>
    <property type="evidence" value="ECO:0000315"/>
    <property type="project" value="MGI"/>
</dbReference>
<dbReference type="GO" id="GO:0001701">
    <property type="term" value="P:in utero embryonic development"/>
    <property type="evidence" value="ECO:0000315"/>
    <property type="project" value="UniProtKB"/>
</dbReference>
<dbReference type="GO" id="GO:0006509">
    <property type="term" value="P:membrane protein ectodomain proteolysis"/>
    <property type="evidence" value="ECO:0000314"/>
    <property type="project" value="UniProtKB"/>
</dbReference>
<dbReference type="GO" id="GO:0042117">
    <property type="term" value="P:monocyte activation"/>
    <property type="evidence" value="ECO:0007669"/>
    <property type="project" value="Ensembl"/>
</dbReference>
<dbReference type="GO" id="GO:0007162">
    <property type="term" value="P:negative regulation of cell adhesion"/>
    <property type="evidence" value="ECO:0000250"/>
    <property type="project" value="UniProtKB"/>
</dbReference>
<dbReference type="GO" id="GO:0010629">
    <property type="term" value="P:negative regulation of gene expression"/>
    <property type="evidence" value="ECO:0007669"/>
    <property type="project" value="Ensembl"/>
</dbReference>
<dbReference type="GO" id="GO:0007220">
    <property type="term" value="P:Notch receptor processing"/>
    <property type="evidence" value="ECO:0000303"/>
    <property type="project" value="UniProtKB"/>
</dbReference>
<dbReference type="GO" id="GO:0007219">
    <property type="term" value="P:Notch signaling pathway"/>
    <property type="evidence" value="ECO:0000315"/>
    <property type="project" value="UniProtKB"/>
</dbReference>
<dbReference type="GO" id="GO:0006913">
    <property type="term" value="P:nucleocytoplasmic transport"/>
    <property type="evidence" value="ECO:0000303"/>
    <property type="project" value="UniProtKB"/>
</dbReference>
<dbReference type="GO" id="GO:0046931">
    <property type="term" value="P:pore complex assembly"/>
    <property type="evidence" value="ECO:0000315"/>
    <property type="project" value="UniProtKB"/>
</dbReference>
<dbReference type="GO" id="GO:0030307">
    <property type="term" value="P:positive regulation of cell growth"/>
    <property type="evidence" value="ECO:0007669"/>
    <property type="project" value="Ensembl"/>
</dbReference>
<dbReference type="GO" id="GO:0008284">
    <property type="term" value="P:positive regulation of cell population proliferation"/>
    <property type="evidence" value="ECO:0007669"/>
    <property type="project" value="Ensembl"/>
</dbReference>
<dbReference type="GO" id="GO:0010820">
    <property type="term" value="P:positive regulation of T cell chemotaxis"/>
    <property type="evidence" value="ECO:0007669"/>
    <property type="project" value="Ensembl"/>
</dbReference>
<dbReference type="GO" id="GO:0099173">
    <property type="term" value="P:postsynapse organization"/>
    <property type="evidence" value="ECO:0000314"/>
    <property type="project" value="SynGO"/>
</dbReference>
<dbReference type="GO" id="GO:0140249">
    <property type="term" value="P:protein catabolic process at postsynapse"/>
    <property type="evidence" value="ECO:0000314"/>
    <property type="project" value="SynGO"/>
</dbReference>
<dbReference type="GO" id="GO:0006468">
    <property type="term" value="P:protein phosphorylation"/>
    <property type="evidence" value="ECO:0000314"/>
    <property type="project" value="UniProtKB"/>
</dbReference>
<dbReference type="GO" id="GO:0016485">
    <property type="term" value="P:protein processing"/>
    <property type="evidence" value="ECO:0000314"/>
    <property type="project" value="MGI"/>
</dbReference>
<dbReference type="GO" id="GO:0098696">
    <property type="term" value="P:regulation of neurotransmitter receptor localization to postsynaptic specialization membrane"/>
    <property type="evidence" value="ECO:0000314"/>
    <property type="project" value="SynGO"/>
</dbReference>
<dbReference type="GO" id="GO:0008593">
    <property type="term" value="P:regulation of Notch signaling pathway"/>
    <property type="evidence" value="ECO:0000315"/>
    <property type="project" value="UniProtKB"/>
</dbReference>
<dbReference type="GO" id="GO:0099175">
    <property type="term" value="P:regulation of postsynapse organization"/>
    <property type="evidence" value="ECO:0000314"/>
    <property type="project" value="SynGO"/>
</dbReference>
<dbReference type="GO" id="GO:1901342">
    <property type="term" value="P:regulation of vasculature development"/>
    <property type="evidence" value="ECO:0000315"/>
    <property type="project" value="UniProtKB"/>
</dbReference>
<dbReference type="GO" id="GO:0034612">
    <property type="term" value="P:response to tumor necrosis factor"/>
    <property type="evidence" value="ECO:0007669"/>
    <property type="project" value="Ensembl"/>
</dbReference>
<dbReference type="GO" id="GO:0140448">
    <property type="term" value="P:signaling receptor ligand precursor processing"/>
    <property type="evidence" value="ECO:0000315"/>
    <property type="project" value="MGI"/>
</dbReference>
<dbReference type="CDD" id="cd04270">
    <property type="entry name" value="ZnMc_TACE_like"/>
    <property type="match status" value="1"/>
</dbReference>
<dbReference type="FunFam" id="3.40.390.10:FF:000011">
    <property type="entry name" value="Disintegrin and metalloproteinase domain-containing protein 10"/>
    <property type="match status" value="1"/>
</dbReference>
<dbReference type="FunFam" id="4.10.70.10:FF:000002">
    <property type="entry name" value="disintegrin and metalloproteinase domain-containing protein 10"/>
    <property type="match status" value="1"/>
</dbReference>
<dbReference type="Gene3D" id="3.40.390.10">
    <property type="entry name" value="Collagenase (Catalytic Domain)"/>
    <property type="match status" value="1"/>
</dbReference>
<dbReference type="Gene3D" id="4.10.70.10">
    <property type="entry name" value="Disintegrin domain"/>
    <property type="match status" value="1"/>
</dbReference>
<dbReference type="InterPro" id="IPR034025">
    <property type="entry name" value="ADAM10_ADAM17"/>
</dbReference>
<dbReference type="InterPro" id="IPR049038">
    <property type="entry name" value="ADAM10_Cys-rich"/>
</dbReference>
<dbReference type="InterPro" id="IPR051489">
    <property type="entry name" value="ADAM_Metalloproteinase"/>
</dbReference>
<dbReference type="InterPro" id="IPR001762">
    <property type="entry name" value="Disintegrin_dom"/>
</dbReference>
<dbReference type="InterPro" id="IPR036436">
    <property type="entry name" value="Disintegrin_dom_sf"/>
</dbReference>
<dbReference type="InterPro" id="IPR024079">
    <property type="entry name" value="MetalloPept_cat_dom_sf"/>
</dbReference>
<dbReference type="InterPro" id="IPR001590">
    <property type="entry name" value="Peptidase_M12B"/>
</dbReference>
<dbReference type="PANTHER" id="PTHR45702">
    <property type="entry name" value="ADAM10/ADAM17 METALLOPEPTIDASE FAMILY MEMBER"/>
    <property type="match status" value="1"/>
</dbReference>
<dbReference type="PANTHER" id="PTHR45702:SF4">
    <property type="entry name" value="DISINTEGRIN AND METALLOPROTEINASE DOMAIN-CONTAINING PROTEIN 10"/>
    <property type="match status" value="1"/>
</dbReference>
<dbReference type="Pfam" id="PF21299">
    <property type="entry name" value="ADAM10_Cys-rich"/>
    <property type="match status" value="1"/>
</dbReference>
<dbReference type="Pfam" id="PF00200">
    <property type="entry name" value="Disintegrin"/>
    <property type="match status" value="1"/>
</dbReference>
<dbReference type="Pfam" id="PF13574">
    <property type="entry name" value="Reprolysin_2"/>
    <property type="match status" value="1"/>
</dbReference>
<dbReference type="SMART" id="SM00050">
    <property type="entry name" value="DISIN"/>
    <property type="match status" value="1"/>
</dbReference>
<dbReference type="SUPFAM" id="SSF57552">
    <property type="entry name" value="Blood coagulation inhibitor (disintegrin)"/>
    <property type="match status" value="1"/>
</dbReference>
<dbReference type="SUPFAM" id="SSF55486">
    <property type="entry name" value="Metalloproteases ('zincins'), catalytic domain"/>
    <property type="match status" value="1"/>
</dbReference>
<dbReference type="PROSITE" id="PS50215">
    <property type="entry name" value="ADAM_MEPRO"/>
    <property type="match status" value="1"/>
</dbReference>
<dbReference type="PROSITE" id="PS50214">
    <property type="entry name" value="DISINTEGRIN_2"/>
    <property type="match status" value="1"/>
</dbReference>
<dbReference type="PROSITE" id="PS00142">
    <property type="entry name" value="ZINC_PROTEASE"/>
    <property type="match status" value="1"/>
</dbReference>
<comment type="function">
    <text evidence="1 10 14 15 16 17 18 19 20 21 22">Transmembrane metalloprotease which mediates the ectodomain shedding of a myriad of transmembrane proteins, including adhesion proteins, growth factor precursors and cytokines being essential for development and tissue homeostasis (PubMed:17245433, PubMed:29325091, PubMed:29430990, PubMed:30639848). Associates with six members of the tetraspanin superfamily TspanC8 which regulate its exit from the endoplasmic reticulum and its substrate selectivity (PubMed:26668317, PubMed:30463011, PubMed:9244301). Cleaves the membrane-bound precursor of TNF-alpha to its mature soluble form. Responsible for the proteolytical release of soluble JAM3 from endothelial cells surface (By similarity). Responsible for the proteolytic release of several other cell-surface proteins, including heparin-binding epidermal growth-like factor, ephrin-A2, CD44, CDH2 and for constitutive and regulated alpha-secretase cleavage of amyloid precursor protein (APP) at '687-Lys-|-Leu-688' (By similarity). Contributes to the normal cleavage of the cellular prion protein (By similarity). Involved in the cleavage of the adhesion molecule L1 at the cell surface and in released membrane vesicles, suggesting a vesicle-based protease activity (By similarity). Also controls the proteolytic processing of Notch and mediates lateral inhibition during neurogenesis (PubMed:9244301). Required for the development of type 1 transitional B cells into marginal zone B cells, probably by cleaving Notch (PubMed:28068307). Responsible for the FasL ectodomain shedding and for the generation of the remnant ADAM10-processed FasL (FasL APL) transmembrane form (By similarity). Also cleaves the ectodomain of the integral membrane proteins CORIN and ITM2B (By similarity). Mediates the proteolytic cleavage of LAG3, leading to release the secreted form of LAG3 (PubMed:17245433). Mediates the proteolytic cleavage of IL6R and IL11RA, leading to the release of secreted forms of IL6R and IL11RA (PubMed:26876177). Enhances the cleavage of CHL1 by BACE1 (PubMed:29325091). Cleaves NRCAM (PubMed:29430990). Cleaves TREM2, resulting in shedding of the TREM2 ectodomain (By similarity). Involved in the development and maturation of glomerular and coronary vasculature (PubMed:29397483, PubMed:30446855). During development of the cochlear organ of Corti, promotes pillar cell separation by forming a ternary complex with CADH1 and EPHA4 and cleaving CADH1 at adherens junctions (PubMed:30639848). May regulate the EFNA5-EPHA3 signaling (By similarity).</text>
</comment>
<comment type="catalytic activity">
    <reaction evidence="10 16 18 21">
        <text>Endopeptidase of broad specificity.</text>
        <dbReference type="EC" id="3.4.24.81"/>
    </reaction>
</comment>
<comment type="cofactor">
    <cofactor evidence="1">
        <name>Zn(2+)</name>
        <dbReference type="ChEBI" id="CHEBI:29105"/>
    </cofactor>
    <text evidence="1">Binds 1 zinc ion per subunit.</text>
</comment>
<comment type="activity regulation">
    <text evidence="1 3">Catalytically inactive when the propeptide is intact and associated with the mature enzyme (By similarity). The disintegrin and cysteine-rich regions modulate access of substrates to exerts an inhibitory effect on the cleavage of ADAM10 substrates (By similarity).</text>
</comment>
<comment type="subunit">
    <text evidence="1 9 12 13 14 16 20 21">Forms a ternary EFNA5-EPHA3-ADAM10 complex mediating EFNA5 extracellular domain shedding by ADAM10 which regulates the EFNA5-EPHA3 complex internalization and function, the cleavage occurs in trans, with ADAM10 and its substrate being on the membranes of opposing cells (By similarity). Interacts with the clathrin adapter AP2 complex subunits AP2A1, AP2A2, AP2B1, and AP2M1; this interaction facilitates ADAM10 endocytosis from the plasma membrane during long-term potentiation in hippocampal neurons (PubMed:23676497). Forms a ternary complex composed of ADAM10, EPHA4 and CADH1; within the complex, ADAM10 cleaves CADH1 which disrupts adherens junctions (PubMed:30639848). Interacts with EPHA2 (PubMed:10958785). Interacts with NGF in a divalent cation-dependent manner (By similarity). Interacts with TSPAN14; the interaction promotes ADAM10 maturation and cell surface expression (PubMed:23035126, PubMed:26668317). Interacts with TSPAN5, TSPAN10, TSPAN14, TSPAN15, TSPAN17 and TSPAN33; these interactions regulate ADAM10 substrate specificity, endocytosis and turnover (PubMed:23035126, PubMed:26668317). Interacts (via extracellular domain) with TSPAN33 (via extracellular domain) and (via cytoplasmic domain) with AFDN; interaction with TSPAN33 allows the docking of ADAM10 to zonula adherens through a PDZ11-dependent interaction between TSPAN33 and PLEKHA7 while interaction with AFDN locks ADAM10 at zonula adherens (PubMed:30463011). Interacts with DLG1; this interaction recruits ADAM10 to the cell membrane during long-term depression in hippocampal neurons (PubMed:23676497). Interacts (via extracellular domain) with BACE1 (via extracellular domain) (PubMed:29325091). Interacts with FAM171A1 (By similarity).</text>
</comment>
<comment type="subcellular location">
    <subcellularLocation>
        <location evidence="13 14 15 20">Cell membrane</location>
        <topology evidence="23">Single-pass type I membrane protein</topology>
    </subcellularLocation>
    <subcellularLocation>
        <location evidence="1">Golgi apparatus membrane</location>
        <topology evidence="23">Single-pass type I membrane protein</topology>
    </subcellularLocation>
    <subcellularLocation>
        <location evidence="1">Cytoplasmic vesicle</location>
        <location evidence="1">Clathrin-coated vesicle</location>
    </subcellularLocation>
    <subcellularLocation>
        <location evidence="16">Cell projection</location>
        <location evidence="16">Axon</location>
    </subcellularLocation>
    <subcellularLocation>
        <location evidence="16">Cell projection</location>
        <location evidence="16">Dendrite</location>
    </subcellularLocation>
    <subcellularLocation>
        <location evidence="20 21">Cell junction</location>
        <location evidence="20 21">Adherens junction</location>
    </subcellularLocation>
    <subcellularLocation>
        <location evidence="20">Cytoplasm</location>
    </subcellularLocation>
    <text evidence="1 13 20">Is localized in the plasma membrane but is also expressed in the Golgi apparatus and in clathrin-coated vesicles derived likely from the Golgi (By similarity). During long term depression, it is recruited to the cell membrane by DLG1 (PubMed:23676497). The immature form is mainly located near cytoplasmic fibrillar structures, while the mature form is predominantly located at zonula adherens and the cell membrane (PubMed:30463011). The localization and clustering of mature ADAM10 to zonula adherens is regulated by AFDN, TSPAN33, PLEKHA7 and PDZD11 (PubMed:30463011).</text>
</comment>
<comment type="tissue specificity">
    <text evidence="13 16 20 21">Expressed in the brain, specifically in neurons and astrocytes (at protein level) (PubMed:23676497, PubMed:29325091). Expressed in inner and outer pillar cells of the organ of Corti (at protein level) (PubMed:30639848). Expressed in kidney and lung (PubMed:30463011).</text>
</comment>
<comment type="developmental stage">
    <text>Widely expressed in the nervous system at 18 dpc, with high expression in the posterior midbrain, which diminished toward the anterior midbrain.</text>
</comment>
<comment type="domain">
    <text evidence="3 14">The Cys-rich region C-terminal to the disintegrin domain functions as a substrate-recognition module, it recognizes the EFNA5-EPHA3 Complex but not the individual proteins (By similarity). Both Cys-rich and stalk region are necessary for interaction with TSPAN5, TSPAN10, TSPAN14, TSPAN17, TSPAN33 (PubMed:26668317). Stalk region is sufficient for interaction with TSPAN15 (PubMed:26668317).</text>
</comment>
<comment type="domain">
    <text evidence="2">The propeptide keeps the metalloprotease in a latent form via a cysteine switch mechanism. This mechanism may be mediated by a highly conserved cysteine (Cys-173) in the propeptide, which interacts and neutralizes the zinc-coordinating HEXGHXXGXXHD catalytic core of the metalloprotease domain. The dissociation of the cysteine from the zinc ion upon the activation-peptide release activates the enzyme.</text>
</comment>
<comment type="PTM">
    <text evidence="3">The precursor is cleaved by furin and PCSK7.</text>
</comment>
<comment type="disruption phenotype">
    <text evidence="17 19">Conditional knockout in endothelial cells results in abnormal myocardial compaction, insufficient systolic contraction, and enlarged hearts relative to body weight (PubMed:30446855). Conditional knockout in endothelial cells also results in dilated glomerular vessels and maturation defects in glomerular endothelial cells but kidney function is not impacted (PubMed:29397483).</text>
</comment>
<reference key="1">
    <citation type="journal article" date="1997" name="Cell">
        <title>Kuzbanian controls proteolytic processing of Notch and mediates lateral inhibition during Drosophila and vertebrate neurogenesis.</title>
        <authorList>
            <person name="Pan D."/>
            <person name="Rubin G.M."/>
        </authorList>
    </citation>
    <scope>NUCLEOTIDE SEQUENCE [MRNA]</scope>
    <scope>FUNCTION</scope>
</reference>
<reference key="2">
    <citation type="journal article" date="2009" name="PLoS Biol.">
        <title>Lineage-specific biology revealed by a finished genome assembly of the mouse.</title>
        <authorList>
            <person name="Church D.M."/>
            <person name="Goodstadt L."/>
            <person name="Hillier L.W."/>
            <person name="Zody M.C."/>
            <person name="Goldstein S."/>
            <person name="She X."/>
            <person name="Bult C.J."/>
            <person name="Agarwala R."/>
            <person name="Cherry J.L."/>
            <person name="DiCuccio M."/>
            <person name="Hlavina W."/>
            <person name="Kapustin Y."/>
            <person name="Meric P."/>
            <person name="Maglott D."/>
            <person name="Birtle Z."/>
            <person name="Marques A.C."/>
            <person name="Graves T."/>
            <person name="Zhou S."/>
            <person name="Teague B."/>
            <person name="Potamousis K."/>
            <person name="Churas C."/>
            <person name="Place M."/>
            <person name="Herschleb J."/>
            <person name="Runnheim R."/>
            <person name="Forrest D."/>
            <person name="Amos-Landgraf J."/>
            <person name="Schwartz D.C."/>
            <person name="Cheng Z."/>
            <person name="Lindblad-Toh K."/>
            <person name="Eichler E.E."/>
            <person name="Ponting C.P."/>
        </authorList>
    </citation>
    <scope>NUCLEOTIDE SEQUENCE [LARGE SCALE GENOMIC DNA]</scope>
    <source>
        <strain>C57BL/6J</strain>
    </source>
</reference>
<reference key="3">
    <citation type="submission" date="2005-07" db="EMBL/GenBank/DDBJ databases">
        <authorList>
            <person name="Mural R.J."/>
            <person name="Adams M.D."/>
            <person name="Myers E.W."/>
            <person name="Smith H.O."/>
            <person name="Venter J.C."/>
        </authorList>
    </citation>
    <scope>NUCLEOTIDE SEQUENCE [LARGE SCALE GENOMIC DNA]</scope>
</reference>
<reference key="4">
    <citation type="journal article" date="2005" name="Science">
        <title>The transcriptional landscape of the mammalian genome.</title>
        <authorList>
            <person name="Carninci P."/>
            <person name="Kasukawa T."/>
            <person name="Katayama S."/>
            <person name="Gough J."/>
            <person name="Frith M.C."/>
            <person name="Maeda N."/>
            <person name="Oyama R."/>
            <person name="Ravasi T."/>
            <person name="Lenhard B."/>
            <person name="Wells C."/>
            <person name="Kodzius R."/>
            <person name="Shimokawa K."/>
            <person name="Bajic V.B."/>
            <person name="Brenner S.E."/>
            <person name="Batalov S."/>
            <person name="Forrest A.R."/>
            <person name="Zavolan M."/>
            <person name="Davis M.J."/>
            <person name="Wilming L.G."/>
            <person name="Aidinis V."/>
            <person name="Allen J.E."/>
            <person name="Ambesi-Impiombato A."/>
            <person name="Apweiler R."/>
            <person name="Aturaliya R.N."/>
            <person name="Bailey T.L."/>
            <person name="Bansal M."/>
            <person name="Baxter L."/>
            <person name="Beisel K.W."/>
            <person name="Bersano T."/>
            <person name="Bono H."/>
            <person name="Chalk A.M."/>
            <person name="Chiu K.P."/>
            <person name="Choudhary V."/>
            <person name="Christoffels A."/>
            <person name="Clutterbuck D.R."/>
            <person name="Crowe M.L."/>
            <person name="Dalla E."/>
            <person name="Dalrymple B.P."/>
            <person name="de Bono B."/>
            <person name="Della Gatta G."/>
            <person name="di Bernardo D."/>
            <person name="Down T."/>
            <person name="Engstrom P."/>
            <person name="Fagiolini M."/>
            <person name="Faulkner G."/>
            <person name="Fletcher C.F."/>
            <person name="Fukushima T."/>
            <person name="Furuno M."/>
            <person name="Futaki S."/>
            <person name="Gariboldi M."/>
            <person name="Georgii-Hemming P."/>
            <person name="Gingeras T.R."/>
            <person name="Gojobori T."/>
            <person name="Green R.E."/>
            <person name="Gustincich S."/>
            <person name="Harbers M."/>
            <person name="Hayashi Y."/>
            <person name="Hensch T.K."/>
            <person name="Hirokawa N."/>
            <person name="Hill D."/>
            <person name="Huminiecki L."/>
            <person name="Iacono M."/>
            <person name="Ikeo K."/>
            <person name="Iwama A."/>
            <person name="Ishikawa T."/>
            <person name="Jakt M."/>
            <person name="Kanapin A."/>
            <person name="Katoh M."/>
            <person name="Kawasawa Y."/>
            <person name="Kelso J."/>
            <person name="Kitamura H."/>
            <person name="Kitano H."/>
            <person name="Kollias G."/>
            <person name="Krishnan S.P."/>
            <person name="Kruger A."/>
            <person name="Kummerfeld S.K."/>
            <person name="Kurochkin I.V."/>
            <person name="Lareau L.F."/>
            <person name="Lazarevic D."/>
            <person name="Lipovich L."/>
            <person name="Liu J."/>
            <person name="Liuni S."/>
            <person name="McWilliam S."/>
            <person name="Madan Babu M."/>
            <person name="Madera M."/>
            <person name="Marchionni L."/>
            <person name="Matsuda H."/>
            <person name="Matsuzawa S."/>
            <person name="Miki H."/>
            <person name="Mignone F."/>
            <person name="Miyake S."/>
            <person name="Morris K."/>
            <person name="Mottagui-Tabar S."/>
            <person name="Mulder N."/>
            <person name="Nakano N."/>
            <person name="Nakauchi H."/>
            <person name="Ng P."/>
            <person name="Nilsson R."/>
            <person name="Nishiguchi S."/>
            <person name="Nishikawa S."/>
            <person name="Nori F."/>
            <person name="Ohara O."/>
            <person name="Okazaki Y."/>
            <person name="Orlando V."/>
            <person name="Pang K.C."/>
            <person name="Pavan W.J."/>
            <person name="Pavesi G."/>
            <person name="Pesole G."/>
            <person name="Petrovsky N."/>
            <person name="Piazza S."/>
            <person name="Reed J."/>
            <person name="Reid J.F."/>
            <person name="Ring B.Z."/>
            <person name="Ringwald M."/>
            <person name="Rost B."/>
            <person name="Ruan Y."/>
            <person name="Salzberg S.L."/>
            <person name="Sandelin A."/>
            <person name="Schneider C."/>
            <person name="Schoenbach C."/>
            <person name="Sekiguchi K."/>
            <person name="Semple C.A."/>
            <person name="Seno S."/>
            <person name="Sessa L."/>
            <person name="Sheng Y."/>
            <person name="Shibata Y."/>
            <person name="Shimada H."/>
            <person name="Shimada K."/>
            <person name="Silva D."/>
            <person name="Sinclair B."/>
            <person name="Sperling S."/>
            <person name="Stupka E."/>
            <person name="Sugiura K."/>
            <person name="Sultana R."/>
            <person name="Takenaka Y."/>
            <person name="Taki K."/>
            <person name="Tammoja K."/>
            <person name="Tan S.L."/>
            <person name="Tang S."/>
            <person name="Taylor M.S."/>
            <person name="Tegner J."/>
            <person name="Teichmann S.A."/>
            <person name="Ueda H.R."/>
            <person name="van Nimwegen E."/>
            <person name="Verardo R."/>
            <person name="Wei C.L."/>
            <person name="Yagi K."/>
            <person name="Yamanishi H."/>
            <person name="Zabarovsky E."/>
            <person name="Zhu S."/>
            <person name="Zimmer A."/>
            <person name="Hide W."/>
            <person name="Bult C."/>
            <person name="Grimmond S.M."/>
            <person name="Teasdale R.D."/>
            <person name="Liu E.T."/>
            <person name="Brusic V."/>
            <person name="Quackenbush J."/>
            <person name="Wahlestedt C."/>
            <person name="Mattick J.S."/>
            <person name="Hume D.A."/>
            <person name="Kai C."/>
            <person name="Sasaki D."/>
            <person name="Tomaru Y."/>
            <person name="Fukuda S."/>
            <person name="Kanamori-Katayama M."/>
            <person name="Suzuki M."/>
            <person name="Aoki J."/>
            <person name="Arakawa T."/>
            <person name="Iida J."/>
            <person name="Imamura K."/>
            <person name="Itoh M."/>
            <person name="Kato T."/>
            <person name="Kawaji H."/>
            <person name="Kawagashira N."/>
            <person name="Kawashima T."/>
            <person name="Kojima M."/>
            <person name="Kondo S."/>
            <person name="Konno H."/>
            <person name="Nakano K."/>
            <person name="Ninomiya N."/>
            <person name="Nishio T."/>
            <person name="Okada M."/>
            <person name="Plessy C."/>
            <person name="Shibata K."/>
            <person name="Shiraki T."/>
            <person name="Suzuki S."/>
            <person name="Tagami M."/>
            <person name="Waki K."/>
            <person name="Watahiki A."/>
            <person name="Okamura-Oho Y."/>
            <person name="Suzuki H."/>
            <person name="Kawai J."/>
            <person name="Hayashizaki Y."/>
        </authorList>
    </citation>
    <scope>NUCLEOTIDE SEQUENCE [LARGE SCALE MRNA] OF 252-749</scope>
    <source>
        <strain>C57BL/6J</strain>
        <tissue>Bone</tissue>
        <tissue>Vagina</tissue>
    </source>
</reference>
<reference key="5">
    <citation type="journal article" date="2000" name="Science">
        <title>Regulated cleavage of a contact-mediated axon repellent.</title>
        <authorList>
            <person name="Hattori M."/>
            <person name="Osterfield M."/>
            <person name="Flanagan J.G."/>
        </authorList>
    </citation>
    <scope>INTERACTION WITH EPHA2</scope>
</reference>
<reference key="6">
    <citation type="journal article" date="2007" name="EMBO J.">
        <title>Metalloproteases regulate T-cell proliferation and effector function via LAG-3.</title>
        <authorList>
            <person name="Li N."/>
            <person name="Wang Y."/>
            <person name="Forbes K."/>
            <person name="Vignali K.M."/>
            <person name="Heale B.S."/>
            <person name="Saftig P."/>
            <person name="Hartmann D."/>
            <person name="Black R.A."/>
            <person name="Rossi J.J."/>
            <person name="Blobel C.P."/>
            <person name="Dempsey P.J."/>
            <person name="Workman C.J."/>
            <person name="Vignali D.A."/>
        </authorList>
    </citation>
    <scope>FUNCTION</scope>
    <scope>CATALYTIC ACTIVITY</scope>
</reference>
<reference key="7">
    <citation type="journal article" date="2009" name="Nat. Biotechnol.">
        <title>Mass-spectrometric identification and relative quantification of N-linked cell surface glycoproteins.</title>
        <authorList>
            <person name="Wollscheid B."/>
            <person name="Bausch-Fluck D."/>
            <person name="Henderson C."/>
            <person name="O'Brien R."/>
            <person name="Bibel M."/>
            <person name="Schiess R."/>
            <person name="Aebersold R."/>
            <person name="Watts J.D."/>
        </authorList>
    </citation>
    <scope>GLYCOSYLATION [LARGE SCALE ANALYSIS] AT ASN-279</scope>
</reference>
<reference key="8">
    <citation type="journal article" date="2010" name="Cell">
        <title>A tissue-specific atlas of mouse protein phosphorylation and expression.</title>
        <authorList>
            <person name="Huttlin E.L."/>
            <person name="Jedrychowski M.P."/>
            <person name="Elias J.E."/>
            <person name="Goswami T."/>
            <person name="Rad R."/>
            <person name="Beausoleil S.A."/>
            <person name="Villen J."/>
            <person name="Haas W."/>
            <person name="Sowa M.E."/>
            <person name="Gygi S.P."/>
        </authorList>
    </citation>
    <scope>PHOSPHORYLATION [LARGE SCALE ANALYSIS] AT THR-720</scope>
    <scope>IDENTIFICATION BY MASS SPECTROMETRY [LARGE SCALE ANALYSIS]</scope>
    <source>
        <tissue>Brain</tissue>
        <tissue>Brown adipose tissue</tissue>
        <tissue>Heart</tissue>
        <tissue>Kidney</tissue>
        <tissue>Lung</tissue>
        <tissue>Pancreas</tissue>
        <tissue>Spleen</tissue>
        <tissue>Testis</tissue>
    </source>
</reference>
<reference key="9">
    <citation type="journal article" date="2012" name="J. Biol. Chem.">
        <title>The TspanC8 subgroup of tetraspanins interacts with A disintegrin and metalloprotease 10 (ADAM10) and regulates its maturation and cell surface expression.</title>
        <authorList>
            <person name="Haining E.J."/>
            <person name="Yang J."/>
            <person name="Bailey R.L."/>
            <person name="Khan K."/>
            <person name="Collier R."/>
            <person name="Tsai S."/>
            <person name="Watson S.P."/>
            <person name="Frampton J."/>
            <person name="Garcia P."/>
            <person name="Tomlinson M.G."/>
        </authorList>
    </citation>
    <scope>INTERACTION WITH TSPAN5; TSPAN10; TSPAN15; TSPAN14; TSPAN17 AND TSPAN33</scope>
</reference>
<reference key="10">
    <citation type="journal article" date="2013" name="J. Clin. Invest.">
        <title>Endocytosis of synaptic ADAM10 in neuronal plasticity and Alzheimer's disease.</title>
        <authorList>
            <person name="Marcello E."/>
            <person name="Saraceno C."/>
            <person name="Musardo S."/>
            <person name="Vara H."/>
            <person name="de la Fuente A.G."/>
            <person name="Pelucchi S."/>
            <person name="Di Marino D."/>
            <person name="Borroni B."/>
            <person name="Tramontano A."/>
            <person name="Perez-Otano I."/>
            <person name="Padovani A."/>
            <person name="Giustetto M."/>
            <person name="Gardoni F."/>
            <person name="Di Luca M."/>
        </authorList>
    </citation>
    <scope>INTERACTION WITH AP2A1; AP2A2; AP2B1; AP2M1 AND DLG1</scope>
    <scope>SUBCELLULAR LOCATION</scope>
    <scope>TISSUE SPECIFICITY</scope>
    <scope>MUTAGENESIS OF 735-ARG--ARG-737 AND GLN-736</scope>
</reference>
<reference key="11">
    <citation type="journal article" date="2016" name="Cell Rep.">
        <title>Proteolytic Cleavage Governs Interleukin-11 Trans-signaling.</title>
        <authorList>
            <person name="Lokau J."/>
            <person name="Nitz R."/>
            <person name="Agthe M."/>
            <person name="Monhasery N."/>
            <person name="Aparicio-Siegmund S."/>
            <person name="Schumacher N."/>
            <person name="Wolf J."/>
            <person name="Moeller-Hackbarth K."/>
            <person name="Waetzig G.H."/>
            <person name="Groetzinger J."/>
            <person name="Mueller-Newen G."/>
            <person name="Rose-John S."/>
            <person name="Scheller J."/>
            <person name="Garbers C."/>
        </authorList>
    </citation>
    <scope>FUNCTION</scope>
</reference>
<reference key="12">
    <citation type="journal article" date="2016" name="J. Biol. Chem.">
        <title>TspanC8 tetraspanins and A disintegrin and metalloprotease 10 (ADAM10) interact via their extracellular regions: evidence for distinct binding mechanisms for different TspanC8 proteins.</title>
        <authorList>
            <person name="Noy P.J."/>
            <person name="Yang J."/>
            <person name="Reyat J.S."/>
            <person name="Matthews A.L."/>
            <person name="Charlton A.E."/>
            <person name="Furmston J."/>
            <person name="Rogers D.A."/>
            <person name="Rainger G.E."/>
            <person name="Tomlinson M.G."/>
        </authorList>
    </citation>
    <scope>INTERACTION WITH TSPAN5; TSPAN10; TSPAN15; TSPAN14; TSPAN17 AND TSPAN33</scope>
    <scope>SUBCELLULAR LOCATION</scope>
    <scope>DOMAIN</scope>
</reference>
<reference key="13">
    <citation type="journal article" date="2017" name="Nat. Immunol.">
        <title>Transitional B cells commit to marginal zone B cell fate by Taok3-mediated surface expression of ADAM10.</title>
        <authorList>
            <person name="Hammad H."/>
            <person name="Vanderkerken M."/>
            <person name="Pouliot P."/>
            <person name="Deswarte K."/>
            <person name="Toussaint W."/>
            <person name="Vergote K."/>
            <person name="Vandersarren L."/>
            <person name="Janssens S."/>
            <person name="Ramou I."/>
            <person name="Savvides S.N."/>
            <person name="Haigh J.J."/>
            <person name="Hendriks R."/>
            <person name="Kopf M."/>
            <person name="Craessaerts K."/>
            <person name="de Strooper B."/>
            <person name="Kearney J.F."/>
            <person name="Conrad D.H."/>
            <person name="Lambrecht B.N."/>
        </authorList>
    </citation>
    <scope>FUNCTION</scope>
    <scope>SUBCELLULAR LOCATION</scope>
</reference>
<reference key="14">
    <citation type="journal article" date="2018" name="Angiogenesis">
        <title>Glomerular endothelial cell maturation depends on ADAM10, a key regulator of Notch signaling.</title>
        <authorList>
            <person name="Farber G."/>
            <person name="Hurtado R."/>
            <person name="Loh S."/>
            <person name="Monette S."/>
            <person name="Mtui J."/>
            <person name="Kopan R."/>
            <person name="Quaggin S."/>
            <person name="Meyer-Schwesinger C."/>
            <person name="Herzlinger D."/>
            <person name="Scott R.P."/>
            <person name="Blobel C.P."/>
        </authorList>
    </citation>
    <scope>FUNCTION</scope>
    <scope>DISRUPTION PHENOTYPE</scope>
</reference>
<reference key="15">
    <citation type="journal article" date="2018" name="Cell Rep.">
        <title>A Dock-and-Lock Mechanism Clusters ADAM10 at Cell-Cell Junctions to Promote alpha-Toxin Cytotoxicity.</title>
        <authorList>
            <person name="Shah J."/>
            <person name="Rouaud F."/>
            <person name="Guerrera D."/>
            <person name="Vasileva E."/>
            <person name="Popov L.M."/>
            <person name="Kelley W.L."/>
            <person name="Rubinstein E."/>
            <person name="Carette J.E."/>
            <person name="Amieva M.R."/>
            <person name="Citi S."/>
        </authorList>
    </citation>
    <scope>INTERACTION WITH TSPAN33 AND AFDN</scope>
    <scope>SUBCELLULAR LOCATION</scope>
    <scope>TISSUE SPECIFICITY</scope>
</reference>
<reference key="16">
    <citation type="journal article" date="2018" name="FASEB J.">
        <title>The metalloprotease ADAM10 (a disintegrin and metalloprotease 10) undergoes rapid, postlysis autocatalytic degradation.</title>
        <authorList>
            <person name="Brummer T."/>
            <person name="Pigoni M."/>
            <person name="Rossello A."/>
            <person name="Wang H."/>
            <person name="Noy P.J."/>
            <person name="Tomlinson M.G."/>
            <person name="Blobel C.P."/>
            <person name="Lichtenthaler S.F."/>
        </authorList>
    </citation>
    <scope>FUNCTION</scope>
    <scope>CATALYTIC ACTIVITY</scope>
</reference>
<reference key="17">
    <citation type="journal article" date="2018" name="J. Mol. Cell Biol.">
        <title>alpha-secretase ADAM10 physically interacts with beta-secretase BACE1 in neurons and regulates CHL1 proteolysis.</title>
        <authorList>
            <person name="Wang X."/>
            <person name="Wang C."/>
            <person name="Pei G."/>
        </authorList>
    </citation>
    <scope>FUNCTION</scope>
    <scope>CATALYTIC ACTIVITY</scope>
    <scope>INTERACTION WITH BACE1</scope>
    <scope>SUBCELLULAR LOCATION</scope>
    <scope>TISSUE SPECIFICITY</scope>
    <scope>ACTIVE SITE</scope>
    <scope>MUTAGENESIS OF GLU-385</scope>
</reference>
<reference key="18">
    <citation type="journal article" date="2019" name="Angiogenesis">
        <title>ADAM10 controls the differentiation of the coronary arterial endothelium.</title>
        <authorList>
            <person name="Farber G."/>
            <person name="Parks M.M."/>
            <person name="Lustgarten Guahmich N."/>
            <person name="Zhang Y."/>
            <person name="Monette S."/>
            <person name="Blanchard S.C."/>
            <person name="Di Lorenzo A."/>
            <person name="Blobel C.P."/>
        </authorList>
    </citation>
    <scope>FUNCTION</scope>
    <scope>DISRUPTION PHENOTYPE</scope>
</reference>
<reference key="19">
    <citation type="journal article" date="2019" name="IScience">
        <title>EphA4-ADAM10 Interplay Patterns the Cochlear Sensory Epithelium through Local Disruption of Adherens Junctions.</title>
        <authorList>
            <person name="Defourny J."/>
            <person name="Peuckert C."/>
            <person name="Kullander K."/>
            <person name="Malgrange B."/>
        </authorList>
    </citation>
    <scope>FUNCTION</scope>
    <scope>CATALYTIC ACTIVITY</scope>
    <scope>IDENTIFICATION IN COMPLEX WITH EPHA4 AND CADH1</scope>
    <scope>SUBCELLULAR LOCATION</scope>
    <scope>TISSUE SPECIFICITY</scope>
</reference>
<keyword id="KW-0965">Cell junction</keyword>
<keyword id="KW-1003">Cell membrane</keyword>
<keyword id="KW-0966">Cell projection</keyword>
<keyword id="KW-0165">Cleavage on pair of basic residues</keyword>
<keyword id="KW-0963">Cytoplasm</keyword>
<keyword id="KW-0968">Cytoplasmic vesicle</keyword>
<keyword id="KW-1015">Disulfide bond</keyword>
<keyword id="KW-0325">Glycoprotein</keyword>
<keyword id="KW-0333">Golgi apparatus</keyword>
<keyword id="KW-0378">Hydrolase</keyword>
<keyword id="KW-0472">Membrane</keyword>
<keyword id="KW-0479">Metal-binding</keyword>
<keyword id="KW-0482">Metalloprotease</keyword>
<keyword id="KW-0914">Notch signaling pathway</keyword>
<keyword id="KW-0597">Phosphoprotein</keyword>
<keyword id="KW-0645">Protease</keyword>
<keyword id="KW-1185">Reference proteome</keyword>
<keyword id="KW-0729">SH3-binding</keyword>
<keyword id="KW-0732">Signal</keyword>
<keyword id="KW-0812">Transmembrane</keyword>
<keyword id="KW-1133">Transmembrane helix</keyword>
<keyword id="KW-0862">Zinc</keyword>
<keyword id="KW-0865">Zymogen</keyword>
<protein>
    <recommendedName>
        <fullName>Disintegrin and metalloproteinase domain-containing protein 10</fullName>
        <shortName>ADAM 10</shortName>
        <ecNumber evidence="10 16 18 21">3.4.24.81</ecNumber>
    </recommendedName>
    <alternativeName>
        <fullName>Kuzbanian protein homolog</fullName>
    </alternativeName>
    <alternativeName>
        <fullName>Mammalian disintegrin-metalloprotease</fullName>
    </alternativeName>
    <cdAntigenName>CD156c</cdAntigenName>
</protein>
<organism>
    <name type="scientific">Mus musculus</name>
    <name type="common">Mouse</name>
    <dbReference type="NCBI Taxonomy" id="10090"/>
    <lineage>
        <taxon>Eukaryota</taxon>
        <taxon>Metazoa</taxon>
        <taxon>Chordata</taxon>
        <taxon>Craniata</taxon>
        <taxon>Vertebrata</taxon>
        <taxon>Euteleostomi</taxon>
        <taxon>Mammalia</taxon>
        <taxon>Eutheria</taxon>
        <taxon>Euarchontoglires</taxon>
        <taxon>Glires</taxon>
        <taxon>Rodentia</taxon>
        <taxon>Myomorpha</taxon>
        <taxon>Muroidea</taxon>
        <taxon>Muridae</taxon>
        <taxon>Murinae</taxon>
        <taxon>Mus</taxon>
        <taxon>Mus</taxon>
    </lineage>
</organism>
<evidence type="ECO:0000250" key="1">
    <source>
        <dbReference type="UniProtKB" id="O14672"/>
    </source>
</evidence>
<evidence type="ECO:0000250" key="2">
    <source>
        <dbReference type="UniProtKB" id="P03956"/>
    </source>
</evidence>
<evidence type="ECO:0000250" key="3">
    <source>
        <dbReference type="UniProtKB" id="Q10741"/>
    </source>
</evidence>
<evidence type="ECO:0000255" key="4"/>
<evidence type="ECO:0000255" key="5">
    <source>
        <dbReference type="PROSITE-ProRule" id="PRU00068"/>
    </source>
</evidence>
<evidence type="ECO:0000255" key="6">
    <source>
        <dbReference type="PROSITE-ProRule" id="PRU00276"/>
    </source>
</evidence>
<evidence type="ECO:0000255" key="7">
    <source>
        <dbReference type="PROSITE-ProRule" id="PRU10095"/>
    </source>
</evidence>
<evidence type="ECO:0000256" key="8">
    <source>
        <dbReference type="SAM" id="MobiDB-lite"/>
    </source>
</evidence>
<evidence type="ECO:0000269" key="9">
    <source>
    </source>
</evidence>
<evidence type="ECO:0000269" key="10">
    <source>
    </source>
</evidence>
<evidence type="ECO:0000269" key="11">
    <source>
    </source>
</evidence>
<evidence type="ECO:0000269" key="12">
    <source>
    </source>
</evidence>
<evidence type="ECO:0000269" key="13">
    <source>
    </source>
</evidence>
<evidence type="ECO:0000269" key="14">
    <source>
    </source>
</evidence>
<evidence type="ECO:0000269" key="15">
    <source>
    </source>
</evidence>
<evidence type="ECO:0000269" key="16">
    <source>
    </source>
</evidence>
<evidence type="ECO:0000269" key="17">
    <source>
    </source>
</evidence>
<evidence type="ECO:0000269" key="18">
    <source>
    </source>
</evidence>
<evidence type="ECO:0000269" key="19">
    <source>
    </source>
</evidence>
<evidence type="ECO:0000269" key="20">
    <source>
    </source>
</evidence>
<evidence type="ECO:0000269" key="21">
    <source>
    </source>
</evidence>
<evidence type="ECO:0000269" key="22">
    <source>
    </source>
</evidence>
<evidence type="ECO:0000305" key="23"/>
<evidence type="ECO:0007744" key="24">
    <source>
    </source>
</evidence>
<accession>O35598</accession>
<accession>B8JJJ0</accession>
<proteinExistence type="evidence at protein level"/>
<sequence>MVLPTVLILLLSWAAGLGGQYGNPLNKYIRHYEGLSYNVDSLHQKHQRAKRAVSHEDQFLLLDFHAHGRQFNLRMKRDTSLFSDEFKVETSNKVLDYDTSHIYTGHIYGEEGSFSHGSVIDGRFEGFIKTRGGTFYIEPAERYIKDRILPFHSVIYHEDDINYPHKYGPQGGCADHSVFERMRKYQMTGVEEGARAHPEKHAASSGPELLRKKRTTLAERNTCQLYIQTDHLFFKYYGTREAVIAQISSHVKAIDTIYQTTDFSGIRNISFMVKRIRINTTSDEKDPTNPFRFPNIGVEKFLELNSEQNHDDYCLAYVFTDRDFDDGVLGLAWVGAPSGSSGGICEKSKLYSDGKKKSLNTGIITVQNYGSHVPPKVSHITFAHEVGHNFGSPHDSGTECTPGESKNLGQKENGNYIMYARATSGDKLNNNKFSLCSIRNISQVLEKKRNNCFVESGQPICGNGMVEQGEECDCGYSDQCKDDCCFDANQPEGKKCKLKPGKQCSPSQGPCCTAQCAFKSKSEKCRDDSDCAKEGICNGFTALCPASDPKPNFTDCNRHTQVCINGQCAGSICEKYDLEECTCASSDGKDDKELCHVCCMKKMAPSTCASTGSLQWSKQFSGRTITLQPGSPCNDFRGYCDVFMRCRLVDADGPLARLKKAIFSPQLYENIAEWIVAHWWAVLLMGIALIMLMAGFIKICSVHTPSSNPKLPPPKPLPGTLKRRRPPQPIQQPPRQRPRESYQMGHMRR</sequence>
<feature type="signal peptide" evidence="4">
    <location>
        <begin position="1"/>
        <end position="19"/>
    </location>
</feature>
<feature type="propeptide" id="PRO_0000029068" evidence="3">
    <location>
        <begin position="20"/>
        <end position="214"/>
    </location>
</feature>
<feature type="chain" id="PRO_0000029069" description="Disintegrin and metalloproteinase domain-containing protein 10">
    <location>
        <begin position="215"/>
        <end position="749"/>
    </location>
</feature>
<feature type="topological domain" description="Extracellular" evidence="4">
    <location>
        <begin position="20"/>
        <end position="673"/>
    </location>
</feature>
<feature type="transmembrane region" description="Helical" evidence="4">
    <location>
        <begin position="674"/>
        <end position="694"/>
    </location>
</feature>
<feature type="topological domain" description="Cytoplasmic" evidence="4">
    <location>
        <begin position="695"/>
        <end position="749"/>
    </location>
</feature>
<feature type="domain" description="Peptidase M12B" evidence="6">
    <location>
        <begin position="221"/>
        <end position="457"/>
    </location>
</feature>
<feature type="domain" description="Disintegrin" evidence="5">
    <location>
        <begin position="458"/>
        <end position="552"/>
    </location>
</feature>
<feature type="region of interest" description="Disordered" evidence="8">
    <location>
        <begin position="705"/>
        <end position="749"/>
    </location>
</feature>
<feature type="region of interest" description="Interaction with AP2A1, AP2A2 and AP2M1" evidence="13">
    <location>
        <begin position="735"/>
        <end position="749"/>
    </location>
</feature>
<feature type="short sequence motif" description="Cysteine switch" evidence="23">
    <location>
        <begin position="171"/>
        <end position="178"/>
    </location>
</feature>
<feature type="short sequence motif" description="SH3-binding" evidence="4">
    <location>
        <begin position="709"/>
        <end position="716"/>
    </location>
</feature>
<feature type="short sequence motif" description="SH3-binding" evidence="4">
    <location>
        <begin position="723"/>
        <end position="729"/>
    </location>
</feature>
<feature type="active site" evidence="6 7 16">
    <location>
        <position position="385"/>
    </location>
</feature>
<feature type="binding site" description="in inhibited form" evidence="2">
    <location>
        <position position="173"/>
    </location>
    <ligand>
        <name>Zn(2+)</name>
        <dbReference type="ChEBI" id="CHEBI:29105"/>
        <note>catalytic</note>
    </ligand>
</feature>
<feature type="binding site" evidence="1">
    <location>
        <position position="384"/>
    </location>
    <ligand>
        <name>Zn(2+)</name>
        <dbReference type="ChEBI" id="CHEBI:29105"/>
        <note>catalytic</note>
    </ligand>
</feature>
<feature type="binding site" evidence="1">
    <location>
        <position position="388"/>
    </location>
    <ligand>
        <name>Zn(2+)</name>
        <dbReference type="ChEBI" id="CHEBI:29105"/>
        <note>catalytic</note>
    </ligand>
</feature>
<feature type="binding site" evidence="1">
    <location>
        <position position="394"/>
    </location>
    <ligand>
        <name>Zn(2+)</name>
        <dbReference type="ChEBI" id="CHEBI:29105"/>
        <note>catalytic</note>
    </ligand>
</feature>
<feature type="site" description="Cleavage; by furin and PCSK7" evidence="3">
    <location>
        <begin position="214"/>
        <end position="215"/>
    </location>
</feature>
<feature type="modified residue" description="Phosphothreonine" evidence="24">
    <location>
        <position position="720"/>
    </location>
</feature>
<feature type="glycosylation site" description="N-linked (GlcNAc...) asparagine" evidence="4">
    <location>
        <position position="268"/>
    </location>
</feature>
<feature type="glycosylation site" description="N-linked (GlcNAc...) asparagine" evidence="11">
    <location>
        <position position="279"/>
    </location>
</feature>
<feature type="glycosylation site" description="N-linked (GlcNAc...) asparagine" evidence="4">
    <location>
        <position position="440"/>
    </location>
</feature>
<feature type="glycosylation site" description="N-linked (GlcNAc...) asparagine" evidence="4">
    <location>
        <position position="552"/>
    </location>
</feature>
<feature type="disulfide bond" evidence="1">
    <location>
        <begin position="223"/>
        <end position="314"/>
    </location>
</feature>
<feature type="disulfide bond" evidence="1">
    <location>
        <begin position="345"/>
        <end position="452"/>
    </location>
</feature>
<feature type="disulfide bond" evidence="1">
    <location>
        <begin position="400"/>
        <end position="436"/>
    </location>
</feature>
<feature type="disulfide bond" evidence="1">
    <location>
        <begin position="461"/>
        <end position="496"/>
    </location>
</feature>
<feature type="disulfide bond" evidence="1">
    <location>
        <begin position="472"/>
        <end position="485"/>
    </location>
</feature>
<feature type="disulfide bond" evidence="1">
    <location>
        <begin position="474"/>
        <end position="480"/>
    </location>
</feature>
<feature type="disulfide bond" evidence="1">
    <location>
        <begin position="484"/>
        <end position="516"/>
    </location>
</feature>
<feature type="disulfide bond" evidence="1">
    <location>
        <begin position="504"/>
        <end position="512"/>
    </location>
</feature>
<feature type="disulfide bond" evidence="1">
    <location>
        <begin position="511"/>
        <end position="537"/>
    </location>
</feature>
<feature type="disulfide bond" evidence="1">
    <location>
        <begin position="525"/>
        <end position="544"/>
    </location>
</feature>
<feature type="disulfide bond" evidence="1">
    <location>
        <begin position="531"/>
        <end position="563"/>
    </location>
</feature>
<feature type="disulfide bond" evidence="1">
    <location>
        <begin position="556"/>
        <end position="568"/>
    </location>
</feature>
<feature type="disulfide bond" evidence="1">
    <location>
        <begin position="573"/>
        <end position="599"/>
    </location>
</feature>
<feature type="disulfide bond" evidence="1">
    <location>
        <begin position="581"/>
        <end position="608"/>
    </location>
</feature>
<feature type="disulfide bond" evidence="1">
    <location>
        <begin position="583"/>
        <end position="598"/>
    </location>
</feature>
<feature type="disulfide bond" evidence="1">
    <location>
        <begin position="595"/>
        <end position="640"/>
    </location>
</feature>
<feature type="disulfide bond" evidence="1">
    <location>
        <begin position="633"/>
        <end position="646"/>
    </location>
</feature>
<feature type="mutagenesis site" description="Loss of catalytic activity." evidence="16">
    <original>E</original>
    <variation>A</variation>
    <location>
        <position position="385"/>
    </location>
</feature>
<feature type="mutagenesis site" description="Loss of binding to AP2A1 and AP2A2. Decreased localization to the plasma membrane." evidence="13">
    <original>RQR</original>
    <variation>AQA</variation>
    <location>
        <begin position="735"/>
        <end position="737"/>
    </location>
</feature>
<feature type="mutagenesis site" description="No loss of binding to AP2A1 and AP2A2." evidence="13">
    <original>Q</original>
    <variation>A</variation>
    <location>
        <position position="736"/>
    </location>
</feature>
<feature type="sequence conflict" description="In Ref. 1; AAC53303." evidence="23" ref="1">
    <original>D</original>
    <variation>N</variation>
    <location>
        <position position="591"/>
    </location>
</feature>
<name>ADA10_MOUSE</name>
<gene>
    <name type="primary">Adam10</name>
    <name type="synonym">Kuz</name>
    <name type="synonym">Madm</name>
</gene>